<sequence length="431" mass="46036">MSKIINVIGREIMDSRGNPTVEAEVHLEGGFNGMAAAPSGASTGSREALELRDGDKTRYMGKGVLKAVANINGPIRDALMGKDATNQAELDQIMIDLDGTENKDKLGANAILAVSLSAAKAAASFKGLPLYAHIAELNGTAGQYSMPVPMMNILNGGEHADNNVDIQEFMVQPVGAKTFREALQVGAEIFHNLKKVLQEKGLSTSVGDEGGFAPNLASNADALAMIKVAVEKAGYKLGEDVTLALDCAASEFYKDGQYDLTGEGKVFSANGFSDFLKSLTEQYPIASIEDGLDESDWDGWAYQTQIMGDKIQLVGDDLFVTNTKILKRGIDNNIANSILIKFNQIGSLTETLAAIRMAKDAGYTVVISHRSGETEDSTIADLAVATSAGQIKTGSLCRSDRVAKYNQLLRIEEQLGEKAPYRGRSEIKGKA</sequence>
<gene>
    <name evidence="1" type="primary">eno</name>
    <name type="ordered locus">Ssed_1290</name>
</gene>
<reference key="1">
    <citation type="submission" date="2007-08" db="EMBL/GenBank/DDBJ databases">
        <title>Complete sequence of Shewanella sediminis HAW-EB3.</title>
        <authorList>
            <consortium name="US DOE Joint Genome Institute"/>
            <person name="Copeland A."/>
            <person name="Lucas S."/>
            <person name="Lapidus A."/>
            <person name="Barry K."/>
            <person name="Glavina del Rio T."/>
            <person name="Dalin E."/>
            <person name="Tice H."/>
            <person name="Pitluck S."/>
            <person name="Chertkov O."/>
            <person name="Brettin T."/>
            <person name="Bruce D."/>
            <person name="Detter J.C."/>
            <person name="Han C."/>
            <person name="Schmutz J."/>
            <person name="Larimer F."/>
            <person name="Land M."/>
            <person name="Hauser L."/>
            <person name="Kyrpides N."/>
            <person name="Kim E."/>
            <person name="Zhao J.-S."/>
            <person name="Richardson P."/>
        </authorList>
    </citation>
    <scope>NUCLEOTIDE SEQUENCE [LARGE SCALE GENOMIC DNA]</scope>
    <source>
        <strain>HAW-EB3</strain>
    </source>
</reference>
<organism>
    <name type="scientific">Shewanella sediminis (strain HAW-EB3)</name>
    <dbReference type="NCBI Taxonomy" id="425104"/>
    <lineage>
        <taxon>Bacteria</taxon>
        <taxon>Pseudomonadati</taxon>
        <taxon>Pseudomonadota</taxon>
        <taxon>Gammaproteobacteria</taxon>
        <taxon>Alteromonadales</taxon>
        <taxon>Shewanellaceae</taxon>
        <taxon>Shewanella</taxon>
    </lineage>
</organism>
<protein>
    <recommendedName>
        <fullName evidence="1">Enolase</fullName>
        <ecNumber evidence="1">4.2.1.11</ecNumber>
    </recommendedName>
    <alternativeName>
        <fullName evidence="1">2-phospho-D-glycerate hydro-lyase</fullName>
    </alternativeName>
    <alternativeName>
        <fullName evidence="1">2-phosphoglycerate dehydratase</fullName>
    </alternativeName>
</protein>
<dbReference type="EC" id="4.2.1.11" evidence="1"/>
<dbReference type="EMBL" id="CP000821">
    <property type="protein sequence ID" value="ABV35901.1"/>
    <property type="molecule type" value="Genomic_DNA"/>
</dbReference>
<dbReference type="RefSeq" id="WP_012141637.1">
    <property type="nucleotide sequence ID" value="NC_009831.1"/>
</dbReference>
<dbReference type="SMR" id="A8FSS8"/>
<dbReference type="STRING" id="425104.Ssed_1290"/>
<dbReference type="KEGG" id="sse:Ssed_1290"/>
<dbReference type="eggNOG" id="COG0148">
    <property type="taxonomic scope" value="Bacteria"/>
</dbReference>
<dbReference type="HOGENOM" id="CLU_031223_2_1_6"/>
<dbReference type="OrthoDB" id="9804716at2"/>
<dbReference type="UniPathway" id="UPA00109">
    <property type="reaction ID" value="UER00187"/>
</dbReference>
<dbReference type="Proteomes" id="UP000002015">
    <property type="component" value="Chromosome"/>
</dbReference>
<dbReference type="GO" id="GO:0009986">
    <property type="term" value="C:cell surface"/>
    <property type="evidence" value="ECO:0007669"/>
    <property type="project" value="UniProtKB-SubCell"/>
</dbReference>
<dbReference type="GO" id="GO:0005576">
    <property type="term" value="C:extracellular region"/>
    <property type="evidence" value="ECO:0007669"/>
    <property type="project" value="UniProtKB-SubCell"/>
</dbReference>
<dbReference type="GO" id="GO:0000015">
    <property type="term" value="C:phosphopyruvate hydratase complex"/>
    <property type="evidence" value="ECO:0007669"/>
    <property type="project" value="InterPro"/>
</dbReference>
<dbReference type="GO" id="GO:0000287">
    <property type="term" value="F:magnesium ion binding"/>
    <property type="evidence" value="ECO:0007669"/>
    <property type="project" value="UniProtKB-UniRule"/>
</dbReference>
<dbReference type="GO" id="GO:0004634">
    <property type="term" value="F:phosphopyruvate hydratase activity"/>
    <property type="evidence" value="ECO:0007669"/>
    <property type="project" value="UniProtKB-UniRule"/>
</dbReference>
<dbReference type="GO" id="GO:0006096">
    <property type="term" value="P:glycolytic process"/>
    <property type="evidence" value="ECO:0007669"/>
    <property type="project" value="UniProtKB-UniRule"/>
</dbReference>
<dbReference type="CDD" id="cd03313">
    <property type="entry name" value="enolase"/>
    <property type="match status" value="1"/>
</dbReference>
<dbReference type="FunFam" id="3.20.20.120:FF:000001">
    <property type="entry name" value="Enolase"/>
    <property type="match status" value="1"/>
</dbReference>
<dbReference type="FunFam" id="3.30.390.10:FF:000001">
    <property type="entry name" value="Enolase"/>
    <property type="match status" value="1"/>
</dbReference>
<dbReference type="Gene3D" id="3.20.20.120">
    <property type="entry name" value="Enolase-like C-terminal domain"/>
    <property type="match status" value="1"/>
</dbReference>
<dbReference type="Gene3D" id="3.30.390.10">
    <property type="entry name" value="Enolase-like, N-terminal domain"/>
    <property type="match status" value="1"/>
</dbReference>
<dbReference type="HAMAP" id="MF_00318">
    <property type="entry name" value="Enolase"/>
    <property type="match status" value="1"/>
</dbReference>
<dbReference type="InterPro" id="IPR000941">
    <property type="entry name" value="Enolase"/>
</dbReference>
<dbReference type="InterPro" id="IPR036849">
    <property type="entry name" value="Enolase-like_C_sf"/>
</dbReference>
<dbReference type="InterPro" id="IPR029017">
    <property type="entry name" value="Enolase-like_N"/>
</dbReference>
<dbReference type="InterPro" id="IPR020810">
    <property type="entry name" value="Enolase_C"/>
</dbReference>
<dbReference type="InterPro" id="IPR020809">
    <property type="entry name" value="Enolase_CS"/>
</dbReference>
<dbReference type="InterPro" id="IPR020811">
    <property type="entry name" value="Enolase_N"/>
</dbReference>
<dbReference type="NCBIfam" id="TIGR01060">
    <property type="entry name" value="eno"/>
    <property type="match status" value="1"/>
</dbReference>
<dbReference type="PANTHER" id="PTHR11902">
    <property type="entry name" value="ENOLASE"/>
    <property type="match status" value="1"/>
</dbReference>
<dbReference type="PANTHER" id="PTHR11902:SF1">
    <property type="entry name" value="ENOLASE"/>
    <property type="match status" value="1"/>
</dbReference>
<dbReference type="Pfam" id="PF00113">
    <property type="entry name" value="Enolase_C"/>
    <property type="match status" value="1"/>
</dbReference>
<dbReference type="Pfam" id="PF03952">
    <property type="entry name" value="Enolase_N"/>
    <property type="match status" value="1"/>
</dbReference>
<dbReference type="PIRSF" id="PIRSF001400">
    <property type="entry name" value="Enolase"/>
    <property type="match status" value="1"/>
</dbReference>
<dbReference type="PRINTS" id="PR00148">
    <property type="entry name" value="ENOLASE"/>
</dbReference>
<dbReference type="SFLD" id="SFLDS00001">
    <property type="entry name" value="Enolase"/>
    <property type="match status" value="1"/>
</dbReference>
<dbReference type="SFLD" id="SFLDF00002">
    <property type="entry name" value="enolase"/>
    <property type="match status" value="1"/>
</dbReference>
<dbReference type="SMART" id="SM01192">
    <property type="entry name" value="Enolase_C"/>
    <property type="match status" value="1"/>
</dbReference>
<dbReference type="SMART" id="SM01193">
    <property type="entry name" value="Enolase_N"/>
    <property type="match status" value="1"/>
</dbReference>
<dbReference type="SUPFAM" id="SSF51604">
    <property type="entry name" value="Enolase C-terminal domain-like"/>
    <property type="match status" value="1"/>
</dbReference>
<dbReference type="SUPFAM" id="SSF54826">
    <property type="entry name" value="Enolase N-terminal domain-like"/>
    <property type="match status" value="1"/>
</dbReference>
<dbReference type="PROSITE" id="PS00164">
    <property type="entry name" value="ENOLASE"/>
    <property type="match status" value="1"/>
</dbReference>
<evidence type="ECO:0000255" key="1">
    <source>
        <dbReference type="HAMAP-Rule" id="MF_00318"/>
    </source>
</evidence>
<feature type="chain" id="PRO_1000079153" description="Enolase">
    <location>
        <begin position="1"/>
        <end position="431"/>
    </location>
</feature>
<feature type="active site" description="Proton donor" evidence="1">
    <location>
        <position position="209"/>
    </location>
</feature>
<feature type="active site" description="Proton acceptor" evidence="1">
    <location>
        <position position="341"/>
    </location>
</feature>
<feature type="binding site" evidence="1">
    <location>
        <position position="167"/>
    </location>
    <ligand>
        <name>(2R)-2-phosphoglycerate</name>
        <dbReference type="ChEBI" id="CHEBI:58289"/>
    </ligand>
</feature>
<feature type="binding site" evidence="1">
    <location>
        <position position="246"/>
    </location>
    <ligand>
        <name>Mg(2+)</name>
        <dbReference type="ChEBI" id="CHEBI:18420"/>
    </ligand>
</feature>
<feature type="binding site" evidence="1">
    <location>
        <position position="289"/>
    </location>
    <ligand>
        <name>Mg(2+)</name>
        <dbReference type="ChEBI" id="CHEBI:18420"/>
    </ligand>
</feature>
<feature type="binding site" evidence="1">
    <location>
        <position position="316"/>
    </location>
    <ligand>
        <name>Mg(2+)</name>
        <dbReference type="ChEBI" id="CHEBI:18420"/>
    </ligand>
</feature>
<feature type="binding site" evidence="1">
    <location>
        <position position="341"/>
    </location>
    <ligand>
        <name>(2R)-2-phosphoglycerate</name>
        <dbReference type="ChEBI" id="CHEBI:58289"/>
    </ligand>
</feature>
<feature type="binding site" evidence="1">
    <location>
        <position position="370"/>
    </location>
    <ligand>
        <name>(2R)-2-phosphoglycerate</name>
        <dbReference type="ChEBI" id="CHEBI:58289"/>
    </ligand>
</feature>
<feature type="binding site" evidence="1">
    <location>
        <position position="371"/>
    </location>
    <ligand>
        <name>(2R)-2-phosphoglycerate</name>
        <dbReference type="ChEBI" id="CHEBI:58289"/>
    </ligand>
</feature>
<feature type="binding site" evidence="1">
    <location>
        <position position="392"/>
    </location>
    <ligand>
        <name>(2R)-2-phosphoglycerate</name>
        <dbReference type="ChEBI" id="CHEBI:58289"/>
    </ligand>
</feature>
<name>ENO_SHESH</name>
<comment type="function">
    <text evidence="1">Catalyzes the reversible conversion of 2-phosphoglycerate (2-PG) into phosphoenolpyruvate (PEP). It is essential for the degradation of carbohydrates via glycolysis.</text>
</comment>
<comment type="catalytic activity">
    <reaction evidence="1">
        <text>(2R)-2-phosphoglycerate = phosphoenolpyruvate + H2O</text>
        <dbReference type="Rhea" id="RHEA:10164"/>
        <dbReference type="ChEBI" id="CHEBI:15377"/>
        <dbReference type="ChEBI" id="CHEBI:58289"/>
        <dbReference type="ChEBI" id="CHEBI:58702"/>
        <dbReference type="EC" id="4.2.1.11"/>
    </reaction>
</comment>
<comment type="cofactor">
    <cofactor evidence="1">
        <name>Mg(2+)</name>
        <dbReference type="ChEBI" id="CHEBI:18420"/>
    </cofactor>
    <text evidence="1">Binds a second Mg(2+) ion via substrate during catalysis.</text>
</comment>
<comment type="pathway">
    <text evidence="1">Carbohydrate degradation; glycolysis; pyruvate from D-glyceraldehyde 3-phosphate: step 4/5.</text>
</comment>
<comment type="subunit">
    <text evidence="1">Component of the RNA degradosome, a multiprotein complex involved in RNA processing and mRNA degradation.</text>
</comment>
<comment type="subcellular location">
    <subcellularLocation>
        <location evidence="1">Cytoplasm</location>
    </subcellularLocation>
    <subcellularLocation>
        <location evidence="1">Secreted</location>
    </subcellularLocation>
    <subcellularLocation>
        <location evidence="1">Cell surface</location>
    </subcellularLocation>
    <text evidence="1">Fractions of enolase are present in both the cytoplasm and on the cell surface.</text>
</comment>
<comment type="similarity">
    <text evidence="1">Belongs to the enolase family.</text>
</comment>
<keyword id="KW-0963">Cytoplasm</keyword>
<keyword id="KW-0324">Glycolysis</keyword>
<keyword id="KW-0456">Lyase</keyword>
<keyword id="KW-0460">Magnesium</keyword>
<keyword id="KW-0479">Metal-binding</keyword>
<keyword id="KW-1185">Reference proteome</keyword>
<keyword id="KW-0964">Secreted</keyword>
<proteinExistence type="inferred from homology"/>
<accession>A8FSS8</accession>